<keyword id="KW-0687">Ribonucleoprotein</keyword>
<keyword id="KW-0689">Ribosomal protein</keyword>
<keyword id="KW-0694">RNA-binding</keyword>
<keyword id="KW-0699">rRNA-binding</keyword>
<reference key="1">
    <citation type="submission" date="2006-03" db="EMBL/GenBank/DDBJ databases">
        <title>Complete sequence of Rhodopseudomonas palustris BisB5.</title>
        <authorList>
            <consortium name="US DOE Joint Genome Institute"/>
            <person name="Copeland A."/>
            <person name="Lucas S."/>
            <person name="Lapidus A."/>
            <person name="Barry K."/>
            <person name="Detter J.C."/>
            <person name="Glavina del Rio T."/>
            <person name="Hammon N."/>
            <person name="Israni S."/>
            <person name="Dalin E."/>
            <person name="Tice H."/>
            <person name="Pitluck S."/>
            <person name="Chain P."/>
            <person name="Malfatti S."/>
            <person name="Shin M."/>
            <person name="Vergez L."/>
            <person name="Schmutz J."/>
            <person name="Larimer F."/>
            <person name="Land M."/>
            <person name="Hauser L."/>
            <person name="Pelletier D.A."/>
            <person name="Kyrpides N."/>
            <person name="Lykidis A."/>
            <person name="Oda Y."/>
            <person name="Harwood C.S."/>
            <person name="Richardson P."/>
        </authorList>
    </citation>
    <scope>NUCLEOTIDE SEQUENCE [LARGE SCALE GENOMIC DNA]</scope>
    <source>
        <strain>BisB5</strain>
    </source>
</reference>
<accession>Q134R6</accession>
<comment type="function">
    <text evidence="1">Forms part of the ribosomal stalk, playing a central role in the interaction of the ribosome with GTP-bound translation factors.</text>
</comment>
<comment type="subunit">
    <text evidence="1">Part of the ribosomal stalk of the 50S ribosomal subunit. The N-terminus interacts with L11 and the large rRNA to form the base of the stalk. The C-terminus forms an elongated spine to which L12 dimers bind in a sequential fashion forming a multimeric L10(L12)X complex.</text>
</comment>
<comment type="similarity">
    <text evidence="1">Belongs to the universal ribosomal protein uL10 family.</text>
</comment>
<proteinExistence type="inferred from homology"/>
<dbReference type="EMBL" id="CP000283">
    <property type="protein sequence ID" value="ABE40423.1"/>
    <property type="molecule type" value="Genomic_DNA"/>
</dbReference>
<dbReference type="SMR" id="Q134R6"/>
<dbReference type="STRING" id="316057.RPD_3197"/>
<dbReference type="KEGG" id="rpd:RPD_3197"/>
<dbReference type="eggNOG" id="COG0244">
    <property type="taxonomic scope" value="Bacteria"/>
</dbReference>
<dbReference type="HOGENOM" id="CLU_092227_0_0_5"/>
<dbReference type="BioCyc" id="RPAL316057:RPD_RS16050-MONOMER"/>
<dbReference type="Proteomes" id="UP000001818">
    <property type="component" value="Chromosome"/>
</dbReference>
<dbReference type="GO" id="GO:0015934">
    <property type="term" value="C:large ribosomal subunit"/>
    <property type="evidence" value="ECO:0007669"/>
    <property type="project" value="InterPro"/>
</dbReference>
<dbReference type="GO" id="GO:0070180">
    <property type="term" value="F:large ribosomal subunit rRNA binding"/>
    <property type="evidence" value="ECO:0007669"/>
    <property type="project" value="UniProtKB-UniRule"/>
</dbReference>
<dbReference type="GO" id="GO:0003735">
    <property type="term" value="F:structural constituent of ribosome"/>
    <property type="evidence" value="ECO:0007669"/>
    <property type="project" value="InterPro"/>
</dbReference>
<dbReference type="GO" id="GO:0006412">
    <property type="term" value="P:translation"/>
    <property type="evidence" value="ECO:0007669"/>
    <property type="project" value="UniProtKB-UniRule"/>
</dbReference>
<dbReference type="CDD" id="cd05797">
    <property type="entry name" value="Ribosomal_L10"/>
    <property type="match status" value="1"/>
</dbReference>
<dbReference type="Gene3D" id="3.30.70.1730">
    <property type="match status" value="1"/>
</dbReference>
<dbReference type="Gene3D" id="6.10.250.290">
    <property type="match status" value="1"/>
</dbReference>
<dbReference type="HAMAP" id="MF_00362">
    <property type="entry name" value="Ribosomal_uL10"/>
    <property type="match status" value="1"/>
</dbReference>
<dbReference type="InterPro" id="IPR001790">
    <property type="entry name" value="Ribosomal_uL10"/>
</dbReference>
<dbReference type="InterPro" id="IPR043141">
    <property type="entry name" value="Ribosomal_uL10-like_sf"/>
</dbReference>
<dbReference type="InterPro" id="IPR022973">
    <property type="entry name" value="Ribosomal_uL10_bac"/>
</dbReference>
<dbReference type="InterPro" id="IPR047865">
    <property type="entry name" value="Ribosomal_uL10_bac_type"/>
</dbReference>
<dbReference type="InterPro" id="IPR002363">
    <property type="entry name" value="Ribosomal_uL10_CS_bac"/>
</dbReference>
<dbReference type="NCBIfam" id="NF000955">
    <property type="entry name" value="PRK00099.1-1"/>
    <property type="match status" value="1"/>
</dbReference>
<dbReference type="PANTHER" id="PTHR11560">
    <property type="entry name" value="39S RIBOSOMAL PROTEIN L10, MITOCHONDRIAL"/>
    <property type="match status" value="1"/>
</dbReference>
<dbReference type="Pfam" id="PF00466">
    <property type="entry name" value="Ribosomal_L10"/>
    <property type="match status" value="1"/>
</dbReference>
<dbReference type="SUPFAM" id="SSF160369">
    <property type="entry name" value="Ribosomal protein L10-like"/>
    <property type="match status" value="1"/>
</dbReference>
<dbReference type="PROSITE" id="PS01109">
    <property type="entry name" value="RIBOSOMAL_L10"/>
    <property type="match status" value="1"/>
</dbReference>
<organism>
    <name type="scientific">Rhodopseudomonas palustris (strain BisB5)</name>
    <dbReference type="NCBI Taxonomy" id="316057"/>
    <lineage>
        <taxon>Bacteria</taxon>
        <taxon>Pseudomonadati</taxon>
        <taxon>Pseudomonadota</taxon>
        <taxon>Alphaproteobacteria</taxon>
        <taxon>Hyphomicrobiales</taxon>
        <taxon>Nitrobacteraceae</taxon>
        <taxon>Rhodopseudomonas</taxon>
    </lineage>
</organism>
<evidence type="ECO:0000255" key="1">
    <source>
        <dbReference type="HAMAP-Rule" id="MF_00362"/>
    </source>
</evidence>
<evidence type="ECO:0000305" key="2"/>
<feature type="chain" id="PRO_1000005575" description="Large ribosomal subunit protein uL10">
    <location>
        <begin position="1"/>
        <end position="172"/>
    </location>
</feature>
<gene>
    <name evidence="1" type="primary">rplJ</name>
    <name type="ordered locus">RPD_3197</name>
</gene>
<sequence length="172" mass="17668">MERAAKKEAVESLNGLFQTTSVAVVAHYSGLTVAQMQKLRSQMKQAGASVKVSKNRLAKIALEGTDVVAIGSLLKGPTVIATSSDPVAAPKVAVEFAKANEKFVILGGSMGKTVLNVDGVKALASLPSLDELRGKLVGLLVAPATKIAQLTTAPAAKVARVVQAYASKSEAA</sequence>
<name>RL10_RHOPS</name>
<protein>
    <recommendedName>
        <fullName evidence="1">Large ribosomal subunit protein uL10</fullName>
    </recommendedName>
    <alternativeName>
        <fullName evidence="2">50S ribosomal protein L10</fullName>
    </alternativeName>
</protein>